<name>OADC_CHRSD</name>
<dbReference type="EC" id="4.1.1.112" evidence="1"/>
<dbReference type="EMBL" id="CP000285">
    <property type="protein sequence ID" value="ABE57615.1"/>
    <property type="molecule type" value="Genomic_DNA"/>
</dbReference>
<dbReference type="RefSeq" id="WP_011505561.1">
    <property type="nucleotide sequence ID" value="NC_007963.1"/>
</dbReference>
<dbReference type="SMR" id="Q1R0Z3"/>
<dbReference type="STRING" id="290398.Csal_0251"/>
<dbReference type="GeneID" id="95332997"/>
<dbReference type="KEGG" id="csa:Csal_0251"/>
<dbReference type="eggNOG" id="COG2513">
    <property type="taxonomic scope" value="Bacteria"/>
</dbReference>
<dbReference type="HOGENOM" id="CLU_027389_3_2_6"/>
<dbReference type="OrthoDB" id="9771433at2"/>
<dbReference type="Proteomes" id="UP000000239">
    <property type="component" value="Chromosome"/>
</dbReference>
<dbReference type="GO" id="GO:0000287">
    <property type="term" value="F:magnesium ion binding"/>
    <property type="evidence" value="ECO:0007669"/>
    <property type="project" value="UniProtKB-UniRule"/>
</dbReference>
<dbReference type="GO" id="GO:0046421">
    <property type="term" value="F:methylisocitrate lyase activity"/>
    <property type="evidence" value="ECO:0007669"/>
    <property type="project" value="TreeGrafter"/>
</dbReference>
<dbReference type="GO" id="GO:0008948">
    <property type="term" value="F:oxaloacetate decarboxylase activity"/>
    <property type="evidence" value="ECO:0007669"/>
    <property type="project" value="UniProtKB-UniRule"/>
</dbReference>
<dbReference type="GO" id="GO:0006107">
    <property type="term" value="P:oxaloacetate metabolic process"/>
    <property type="evidence" value="ECO:0007669"/>
    <property type="project" value="UniProtKB-UniRule"/>
</dbReference>
<dbReference type="GO" id="GO:0019629">
    <property type="term" value="P:propionate catabolic process, 2-methylcitrate cycle"/>
    <property type="evidence" value="ECO:0007669"/>
    <property type="project" value="TreeGrafter"/>
</dbReference>
<dbReference type="GO" id="GO:0042866">
    <property type="term" value="P:pyruvate biosynthetic process"/>
    <property type="evidence" value="ECO:0007669"/>
    <property type="project" value="UniProtKB-UniRule"/>
</dbReference>
<dbReference type="CDD" id="cd00377">
    <property type="entry name" value="ICL_PEPM"/>
    <property type="match status" value="1"/>
</dbReference>
<dbReference type="Gene3D" id="3.20.20.60">
    <property type="entry name" value="Phosphoenolpyruvate-binding domains"/>
    <property type="match status" value="1"/>
</dbReference>
<dbReference type="HAMAP" id="MF_01299">
    <property type="entry name" value="OadC"/>
    <property type="match status" value="1"/>
</dbReference>
<dbReference type="InterPro" id="IPR039556">
    <property type="entry name" value="ICL/PEPM"/>
</dbReference>
<dbReference type="InterPro" id="IPR023687">
    <property type="entry name" value="Oxaloacetate_deCOase_bac"/>
</dbReference>
<dbReference type="InterPro" id="IPR015813">
    <property type="entry name" value="Pyrv/PenolPyrv_kinase-like_dom"/>
</dbReference>
<dbReference type="InterPro" id="IPR040442">
    <property type="entry name" value="Pyrv_kinase-like_dom_sf"/>
</dbReference>
<dbReference type="PANTHER" id="PTHR42905:SF3">
    <property type="entry name" value="OXALOACETATE DECARBOXYLASE"/>
    <property type="match status" value="1"/>
</dbReference>
<dbReference type="PANTHER" id="PTHR42905">
    <property type="entry name" value="PHOSPHOENOLPYRUVATE CARBOXYLASE"/>
    <property type="match status" value="1"/>
</dbReference>
<dbReference type="Pfam" id="PF13714">
    <property type="entry name" value="PEP_mutase"/>
    <property type="match status" value="1"/>
</dbReference>
<dbReference type="SUPFAM" id="SSF51621">
    <property type="entry name" value="Phosphoenolpyruvate/pyruvate domain"/>
    <property type="match status" value="1"/>
</dbReference>
<organism>
    <name type="scientific">Chromohalobacter salexigens (strain ATCC BAA-138 / DSM 3043 / CIP 106854 / NCIMB 13768 / 1H11)</name>
    <dbReference type="NCBI Taxonomy" id="290398"/>
    <lineage>
        <taxon>Bacteria</taxon>
        <taxon>Pseudomonadati</taxon>
        <taxon>Pseudomonadota</taxon>
        <taxon>Gammaproteobacteria</taxon>
        <taxon>Oceanospirillales</taxon>
        <taxon>Halomonadaceae</taxon>
        <taxon>Chromohalobacter</taxon>
    </lineage>
</organism>
<proteinExistence type="inferred from homology"/>
<comment type="function">
    <text evidence="1">Catalyzes the decarboxylation of oxaloacetate into pyruvate. Seems to play a role in maintaining cellular concentrations of bicarbonate and pyruvate.</text>
</comment>
<comment type="catalytic activity">
    <reaction evidence="1">
        <text>oxaloacetate + H(+) = pyruvate + CO2</text>
        <dbReference type="Rhea" id="RHEA:15641"/>
        <dbReference type="ChEBI" id="CHEBI:15361"/>
        <dbReference type="ChEBI" id="CHEBI:15378"/>
        <dbReference type="ChEBI" id="CHEBI:16452"/>
        <dbReference type="ChEBI" id="CHEBI:16526"/>
        <dbReference type="EC" id="4.1.1.112"/>
    </reaction>
</comment>
<comment type="cofactor">
    <cofactor evidence="1">
        <name>Mg(2+)</name>
        <dbReference type="ChEBI" id="CHEBI:18420"/>
    </cofactor>
    <text evidence="1">Binds 1 Mg(2+) ion per subunit.</text>
</comment>
<comment type="subunit">
    <text evidence="1">Homotetramer; dimer of dimers.</text>
</comment>
<comment type="similarity">
    <text evidence="2">Belongs to the isocitrate lyase/PEP mutase superfamily. Oxaloacetate decarboxylase family.</text>
</comment>
<evidence type="ECO:0000255" key="1">
    <source>
        <dbReference type="HAMAP-Rule" id="MF_01299"/>
    </source>
</evidence>
<evidence type="ECO:0000305" key="2"/>
<keyword id="KW-0210">Decarboxylase</keyword>
<keyword id="KW-0456">Lyase</keyword>
<keyword id="KW-0460">Magnesium</keyword>
<keyword id="KW-0479">Metal-binding</keyword>
<keyword id="KW-1185">Reference proteome</keyword>
<feature type="chain" id="PRO_0000364056" description="Oxaloacetate decarboxylase">
    <location>
        <begin position="1"/>
        <end position="287"/>
    </location>
</feature>
<feature type="binding site" evidence="1">
    <location>
        <position position="50"/>
    </location>
    <ligand>
        <name>substrate</name>
    </ligand>
</feature>
<feature type="binding site" evidence="1">
    <location>
        <position position="88"/>
    </location>
    <ligand>
        <name>Mg(2+)</name>
        <dbReference type="ChEBI" id="CHEBI:18420"/>
    </ligand>
</feature>
<feature type="binding site" evidence="1">
    <location>
        <position position="159"/>
    </location>
    <ligand>
        <name>substrate</name>
    </ligand>
</feature>
<feature type="binding site" evidence="1">
    <location>
        <position position="235"/>
    </location>
    <ligand>
        <name>substrate</name>
    </ligand>
</feature>
<reference key="1">
    <citation type="journal article" date="2011" name="Stand. Genomic Sci.">
        <title>Complete genome sequence of the halophilic and highly halotolerant Chromohalobacter salexigens type strain (1H11(T)).</title>
        <authorList>
            <person name="Copeland A."/>
            <person name="O'Connor K."/>
            <person name="Lucas S."/>
            <person name="Lapidus A."/>
            <person name="Berry K.W."/>
            <person name="Detter J.C."/>
            <person name="Del Rio T.G."/>
            <person name="Hammon N."/>
            <person name="Dalin E."/>
            <person name="Tice H."/>
            <person name="Pitluck S."/>
            <person name="Bruce D."/>
            <person name="Goodwin L."/>
            <person name="Han C."/>
            <person name="Tapia R."/>
            <person name="Saunders E."/>
            <person name="Schmutz J."/>
            <person name="Brettin T."/>
            <person name="Larimer F."/>
            <person name="Land M."/>
            <person name="Hauser L."/>
            <person name="Vargas C."/>
            <person name="Nieto J.J."/>
            <person name="Kyrpides N.C."/>
            <person name="Ivanova N."/>
            <person name="Goker M."/>
            <person name="Klenk H.P."/>
            <person name="Csonka L.N."/>
            <person name="Woyke T."/>
        </authorList>
    </citation>
    <scope>NUCLEOTIDE SEQUENCE [LARGE SCALE GENOMIC DNA]</scope>
    <source>
        <strain>ATCC BAA-138 / DSM 3043 / CIP 106854 / NCIMB 13768 / 1H11</strain>
    </source>
</reference>
<accession>Q1R0Z3</accession>
<protein>
    <recommendedName>
        <fullName evidence="1">Oxaloacetate decarboxylase</fullName>
        <ecNumber evidence="1">4.1.1.112</ecNumber>
    </recommendedName>
</protein>
<sequence length="287" mass="31173">MATPSQHDLRNDFRALLASSECYFTASVFDPMSARIAADLGFEVGILGGSVASLQVLAAPDFALITLSEFVEQATRIGRVTRLPVIADADHGYGNALNVMRTITELERAGVAALTIEDTLLPAQYGHKSTDLIPLDEGVGKMRAALEARIDPAMAIIARTNAGQLDDEAAVERVCAYQAAGVDAICLVGVRDFDHLERLAAPLDIPLMLVTYGNPELRDRARLAALGVRVVVNGHAAYFAAIKATYDCLREQRDIAASELNASQLATRYSTLDEYREWARDYMDVKE</sequence>
<gene>
    <name type="ordered locus">Csal_0251</name>
</gene>